<proteinExistence type="evidence at protein level"/>
<name>PATJ_PENEN</name>
<protein>
    <recommendedName>
        <fullName evidence="1">Probable oxidoreductase patJ</fullName>
        <ecNumber evidence="13">1.-.-.-</ecNumber>
    </recommendedName>
    <alternativeName>
        <fullName evidence="11">Patulin biosynthesis cluster protein J</fullName>
    </alternativeName>
</protein>
<comment type="function">
    <text evidence="6 9 10 13">Probable oxidoreductase; part of the gene cluster that mediates the biosynthesis of patulin, an acetate-derived tetraketide mycotoxin produced by several fungal species that shows antimicrobial properties against several bacteria (PubMed:25625822, PubMed:30100914, PubMed:30680886). PatJ acts with patO in the vacuole to convert gentisyl alcohol to isoepoxydon (PubMed:30680886). The pathway begins with the synthesis of 6-methylsalicylic acid by the polyketide synthase (PKS) patK via condensation of acetate and malonate units. The 6-methylsalicylic acid decarboxylase patG then catalyzes the decarboxylation of 6-methylsalicylic acid to yield m-cresol (also known as 3-methylphenol). These first reactions occur in the cytosol. The intermediate m-cresol is then transported into the endoplasmic reticulum where the cytochrome P450 monooxygenase patH converts it to m-hydroxybenzyl alcohol, which is further converted to gentisyl alcohol by the cytochrome P450 monooxygenase patI. The oxidoreductases patJ and patO further convert gentisyl alcohol to isoepoxydon in the vacuole. PatN catalyzes then the transformation of isoepoxydon into phyllostine. The cluster protein patF is responsible for the conversion from phyllostine to neopatulin whereas the alcohol dehydrogenase patD converts neopatulin to E-ascladiol. The steps between isoepoxydon and E-ascladiol occur in the cytosol, and E-ascladiol is probably secreted to the extracellular space by one of the cluster-specific transporters patC or patM. Finally, the secreted patulin synthase patE catalyzes the conversion of E-ascladiol to patulin (Probable) (PubMed:30680886).</text>
</comment>
<comment type="pathway">
    <text evidence="10">Mycotoxin biosynthesis; patulin biosynthesis.</text>
</comment>
<comment type="subcellular location">
    <subcellularLocation>
        <location evidence="10">Vacuole lumen</location>
    </subcellularLocation>
    <subcellularLocation>
        <location evidence="10">Cytoplasmic vesicle lumen</location>
    </subcellularLocation>
</comment>
<comment type="induction">
    <text evidence="5 6 8 9 10">Expression is correlated with the production of patulin (PubMed:25120234). Expression is positively regulated by the secondary metabolism regulator laeA (PubMed:27528575, PubMed:30100914). Expression is strongly decreased with increased sucrose concentrations. This decrease is lost in the presence of malic acid (PubMed:30100914). Expression is increased with pH changes from 2.5 to 3.5 in the presence of a limiting concentration of sucrose, 50 mM (PubMed:30100914). Natural phenols present in apple fruits such as chlorogenic acid or the flavonoid epicatechin modulate patulin biosynthesis. They increase expression in the absence of sucrose, have little impact in the presence of 15 mM sucrose, and decrease expression in 175 mM sucrose (PubMed:30100914). Expression is positively regulated by the patulin cluster-specific transcription factor patL (PubMed:25625822). Finally, expression is also positively regulated by the velvet family proteins transcription regulators veA, velB, velC, but not vosA (PubMed:30680886).</text>
</comment>
<comment type="disruption phenotype">
    <text evidence="10">Completely abolishes the production of patulin and shows significant slower colony expansion.</text>
</comment>
<comment type="biotechnology">
    <text evidence="3 4 7">Patulin was originally used as an antibiotic and specifically trialed to be used against the common cold, but it is no longer used for that purpose since it has been shown to induce immunological, neurological and gastrointestinal effects (PubMed:15082620). Genotoxic effects of patulin with dose-dependent increase in DNA strand breaks in brain, liver and kidneys have been detected in mice (PubMed:22222931). However, more recently, it has been proposed that patulin might also have anti-tumor properties (PubMed:26619846).</text>
</comment>
<comment type="similarity">
    <text evidence="12">Belongs to the oxidoreductase OpS7 family.</text>
</comment>
<reference key="1">
    <citation type="journal article" date="2014" name="Int. J. Food Microbiol.">
        <title>Sequencing, physical organization and kinetic expression of the patulin biosynthetic gene cluster from Penicillium expansum.</title>
        <authorList>
            <person name="Tannous J."/>
            <person name="El Khoury R."/>
            <person name="Snini S.P."/>
            <person name="Lippi Y."/>
            <person name="El Khoury A."/>
            <person name="Atoui A."/>
            <person name="Lteif R."/>
            <person name="Oswald I.P."/>
            <person name="Puel O."/>
        </authorList>
    </citation>
    <scope>NUCLEOTIDE SEQUENCE [GENOMIC DNA]</scope>
    <scope>IDENTIFICATION</scope>
    <scope>INDUCTION</scope>
    <source>
        <strain>NRRL 35695</strain>
    </source>
</reference>
<reference key="2">
    <citation type="journal article" date="2015" name="Mol. Plant Microbe Interact.">
        <title>Genome, transcriptome, and functional analyses of Penicillium expansum provide new insights into secondary metabolism and pathogenicity.</title>
        <authorList>
            <person name="Ballester A.R."/>
            <person name="Marcet-Houben M."/>
            <person name="Levin E."/>
            <person name="Sela N."/>
            <person name="Selma-Lazaro C."/>
            <person name="Carmona L."/>
            <person name="Wisniewski M."/>
            <person name="Droby S."/>
            <person name="Gonzalez-Candelas L."/>
            <person name="Gabaldon T."/>
        </authorList>
    </citation>
    <scope>NUCLEOTIDE SEQUENCE [LARGE SCALE GENOMIC DNA]</scope>
    <source>
        <strain>MD-8</strain>
    </source>
</reference>
<reference key="3">
    <citation type="journal article" date="2004" name="Int. J. Epidemiol.">
        <title>Clinical trial of patulin in the common cold. 1944.</title>
        <authorList>
            <consortium name="Patulin Clinical Trials Committee, Medical Research Council"/>
        </authorList>
    </citation>
    <scope>BIOTECHNOLOGY</scope>
</reference>
<reference key="4">
    <citation type="journal article" date="2012" name="Food Chem. Toxicol.">
        <title>DNA damage in organs of mice treated acutely with patulin, a known mycotoxin.</title>
        <authorList>
            <person name="de Melo F.T."/>
            <person name="de Oliveira I.M."/>
            <person name="Greggio S."/>
            <person name="Dacosta J.C."/>
            <person name="Guecheva T.N."/>
            <person name="Saffi J."/>
            <person name="Henriques J.A."/>
            <person name="Rosa R.M."/>
        </authorList>
    </citation>
    <scope>BIOTECHNOLOGY</scope>
</reference>
<reference key="5">
    <citation type="journal article" date="2016" name="Tumor Biol.">
        <title>The potential effect of patulin on mice bearing melanoma cells: an anti-tumour or carcinogenic effect?</title>
        <authorList>
            <person name="Boussabbeh M."/>
            <person name="Ben Salem I."/>
            <person name="Rjiba-Touati K."/>
            <person name="Bouyahya C."/>
            <person name="Neffati F."/>
            <person name="Najjar M.F."/>
            <person name="Bacha H."/>
            <person name="Abid-Essefi S."/>
        </authorList>
    </citation>
    <scope>BIOTECHNOLOGY</scope>
</reference>
<reference key="6">
    <citation type="journal article" date="2017" name="Mol. Plant Pathol.">
        <title>LaeA regulation of secondary metabolism modulates virulence in Penicillium expansum and is mediated by sucrose.</title>
        <authorList>
            <person name="Kumar D."/>
            <person name="Barad S."/>
            <person name="Chen Y."/>
            <person name="Luo X."/>
            <person name="Tannous J."/>
            <person name="Dubey A."/>
            <person name="Glam Matana N."/>
            <person name="Tian S."/>
            <person name="Li B."/>
            <person name="Keller N."/>
            <person name="Prusky D."/>
        </authorList>
    </citation>
    <scope>INDUCTION</scope>
</reference>
<reference key="7">
    <citation type="journal article" date="2018" name="Front. Plant Sci.">
        <title>Apple intrinsic factors modulating the global regulator, LaeA, the patulin gene cluster and patulin accumulation during fruit colonization by Penicillium expansum.</title>
        <authorList>
            <person name="Kumar D."/>
            <person name="Tannous J."/>
            <person name="Sionov E."/>
            <person name="Keller N."/>
            <person name="Prusky D."/>
        </authorList>
    </citation>
    <scope>FUNCTION</scope>
    <scope>INDUCTION</scope>
</reference>
<reference key="8">
    <citation type="journal article" date="2015" name="Mol. Plant Microbe Interact.">
        <title>Genomic characterization reveals insights into patulin biosynthesis and pathogenicity in Penicillium species.</title>
        <authorList>
            <person name="Li B."/>
            <person name="Zong Y."/>
            <person name="Du Z."/>
            <person name="Chen Y."/>
            <person name="Zhang Z."/>
            <person name="Qin G."/>
            <person name="Zhao W."/>
            <person name="Tian S."/>
        </authorList>
    </citation>
    <scope>FUNCTION</scope>
    <scope>INDUCTION</scope>
</reference>
<reference key="9">
    <citation type="journal article" date="2019" name="Environ. Microbiol.">
        <title>Dissection of patulin biosynthesis, spatial control and regulation mechanism in Penicillium expansum.</title>
        <authorList>
            <person name="Li B."/>
            <person name="Chen Y."/>
            <person name="Zong Y."/>
            <person name="Shang Y."/>
            <person name="Zhang Z."/>
            <person name="Xu X."/>
            <person name="Wang X."/>
            <person name="Long M."/>
            <person name="Tian S."/>
        </authorList>
    </citation>
    <scope>FUNCTION</scope>
    <scope>DISRUPTION PHENOTYPE</scope>
    <scope>SUBCELLULAR LOCATION</scope>
    <scope>INDUCTION</scope>
    <scope>PATHWAY</scope>
</reference>
<evidence type="ECO:0000250" key="1">
    <source>
        <dbReference type="UniProtKB" id="J5J930"/>
    </source>
</evidence>
<evidence type="ECO:0000256" key="2">
    <source>
        <dbReference type="SAM" id="MobiDB-lite"/>
    </source>
</evidence>
<evidence type="ECO:0000269" key="3">
    <source>
    </source>
</evidence>
<evidence type="ECO:0000269" key="4">
    <source>
    </source>
</evidence>
<evidence type="ECO:0000269" key="5">
    <source>
    </source>
</evidence>
<evidence type="ECO:0000269" key="6">
    <source>
    </source>
</evidence>
<evidence type="ECO:0000269" key="7">
    <source>
    </source>
</evidence>
<evidence type="ECO:0000269" key="8">
    <source>
    </source>
</evidence>
<evidence type="ECO:0000269" key="9">
    <source>
    </source>
</evidence>
<evidence type="ECO:0000269" key="10">
    <source>
    </source>
</evidence>
<evidence type="ECO:0000303" key="11">
    <source>
    </source>
</evidence>
<evidence type="ECO:0000305" key="12"/>
<evidence type="ECO:0000305" key="13">
    <source>
    </source>
</evidence>
<feature type="chain" id="PRO_0000445923" description="Probable oxidoreductase patJ">
    <location>
        <begin position="1"/>
        <end position="326"/>
    </location>
</feature>
<feature type="region of interest" description="Disordered" evidence="2">
    <location>
        <begin position="287"/>
        <end position="326"/>
    </location>
</feature>
<feature type="compositionally biased region" description="Polar residues" evidence="2">
    <location>
        <begin position="292"/>
        <end position="304"/>
    </location>
</feature>
<dbReference type="EC" id="1.-.-.-" evidence="13"/>
<dbReference type="EMBL" id="KF899892">
    <property type="protein sequence ID" value="AIG62147.1"/>
    <property type="molecule type" value="Genomic_DNA"/>
</dbReference>
<dbReference type="EMBL" id="JQFZ01000262">
    <property type="protein sequence ID" value="KGO52640.1"/>
    <property type="molecule type" value="Genomic_DNA"/>
</dbReference>
<dbReference type="RefSeq" id="XP_016595370.1">
    <property type="nucleotide sequence ID" value="XM_016745557.1"/>
</dbReference>
<dbReference type="SMR" id="A0A075TR41"/>
<dbReference type="STRING" id="27334.A0A075TR41"/>
<dbReference type="GeneID" id="27680977"/>
<dbReference type="VEuPathDB" id="FungiDB:PEXP_094450"/>
<dbReference type="HOGENOM" id="CLU_068080_0_0_1"/>
<dbReference type="OrthoDB" id="9976870at2759"/>
<dbReference type="PhylomeDB" id="A0A075TR41"/>
<dbReference type="BioCyc" id="MetaCyc:MONOMER-21164"/>
<dbReference type="UniPathway" id="UPA00918"/>
<dbReference type="Proteomes" id="UP000030143">
    <property type="component" value="Unassembled WGS sequence"/>
</dbReference>
<dbReference type="GO" id="GO:0060205">
    <property type="term" value="C:cytoplasmic vesicle lumen"/>
    <property type="evidence" value="ECO:0007669"/>
    <property type="project" value="UniProtKB-SubCell"/>
</dbReference>
<dbReference type="GO" id="GO:0000328">
    <property type="term" value="C:fungal-type vacuole lumen"/>
    <property type="evidence" value="ECO:0000314"/>
    <property type="project" value="UniProt"/>
</dbReference>
<dbReference type="GO" id="GO:0005773">
    <property type="term" value="C:vacuole"/>
    <property type="evidence" value="ECO:0000314"/>
    <property type="project" value="GO_Central"/>
</dbReference>
<dbReference type="GO" id="GO:0016491">
    <property type="term" value="F:oxidoreductase activity"/>
    <property type="evidence" value="ECO:0000314"/>
    <property type="project" value="UniProt"/>
</dbReference>
<dbReference type="GO" id="GO:0016218">
    <property type="term" value="F:polyketide synthase activity"/>
    <property type="evidence" value="ECO:0000314"/>
    <property type="project" value="UniProt"/>
</dbReference>
<dbReference type="GO" id="GO:0140723">
    <property type="term" value="P:patulin biosynthetic process"/>
    <property type="evidence" value="ECO:0000314"/>
    <property type="project" value="UniProt"/>
</dbReference>
<dbReference type="Gene3D" id="2.60.120.10">
    <property type="entry name" value="Jelly Rolls"/>
    <property type="match status" value="1"/>
</dbReference>
<dbReference type="InterPro" id="IPR014710">
    <property type="entry name" value="RmlC-like_jellyroll"/>
</dbReference>
<dbReference type="InterPro" id="IPR011051">
    <property type="entry name" value="RmlC_Cupin_sf"/>
</dbReference>
<dbReference type="SUPFAM" id="SSF51182">
    <property type="entry name" value="RmlC-like cupins"/>
    <property type="match status" value="1"/>
</dbReference>
<accession>A0A075TR41</accession>
<gene>
    <name evidence="11" type="primary">patJ</name>
    <name type="ORF">PEX2_082870</name>
</gene>
<sequence>MAPFVPYHYSAGQSTIVKFGGLLTTEFLEPPPGRCFLFRQTYRHTIEGSIPENLRKLINSPDRPKGPPPHFHQFQTEYFRVENGVLGISVDGVVRRITPEDGEISVKAGSVHNFFIHPDSPENMTVYLSASDSGNDYQLDRVFFENWYGYWHDALLHDGGIDWIQFLAIQDGGDAYTPAPAWVPFRRQVGYWTCVIVGRWIGGLLGYKPFFREYTTDWDFAVAKMKGSFFQRHLVHAAFEEEKSWTKQAELEPKGKPENAEFEPWTEDMSPAPLSLGPVAYEQGLFHGVQPGSVNGSNGHSTGVESKLEQLGSRAQRRVVIDDAGK</sequence>
<organism>
    <name type="scientific">Penicillium expansum</name>
    <name type="common">Blue mold rot fungus</name>
    <dbReference type="NCBI Taxonomy" id="27334"/>
    <lineage>
        <taxon>Eukaryota</taxon>
        <taxon>Fungi</taxon>
        <taxon>Dikarya</taxon>
        <taxon>Ascomycota</taxon>
        <taxon>Pezizomycotina</taxon>
        <taxon>Eurotiomycetes</taxon>
        <taxon>Eurotiomycetidae</taxon>
        <taxon>Eurotiales</taxon>
        <taxon>Aspergillaceae</taxon>
        <taxon>Penicillium</taxon>
    </lineage>
</organism>
<keyword id="KW-0968">Cytoplasmic vesicle</keyword>
<keyword id="KW-0560">Oxidoreductase</keyword>
<keyword id="KW-1185">Reference proteome</keyword>
<keyword id="KW-0926">Vacuole</keyword>